<sequence>MNKTAIALLALLASSASLAATPWQKITQPVPGSAQSIGSFSNGCIVGADTLPIQSEHYQVMRTDQRRYFGHPDLVMFIQRLSRQVSNLGMGTVLIGDMGMPAGGRFNGGHASHQTGLDVDIFLQLPKTRWTSAQLLRPQALDLVSRDGKHVVPTLWKPEIFSLIKLAAQDKDVTRIFVNPAIKQQLCLDAGTDRDWLRKVRPWFQHRAHMHVRLRCPADSLECEDQPLPPPGDGCGAELQSWFEPPKPGTTKPEKKTPPPLPPSCQALLDEHVI</sequence>
<name>MEPA_ECOL5</name>
<organism>
    <name type="scientific">Escherichia coli O6:K15:H31 (strain 536 / UPEC)</name>
    <dbReference type="NCBI Taxonomy" id="362663"/>
    <lineage>
        <taxon>Bacteria</taxon>
        <taxon>Pseudomonadati</taxon>
        <taxon>Pseudomonadota</taxon>
        <taxon>Gammaproteobacteria</taxon>
        <taxon>Enterobacterales</taxon>
        <taxon>Enterobacteriaceae</taxon>
        <taxon>Escherichia</taxon>
    </lineage>
</organism>
<dbReference type="EC" id="3.4.24.-" evidence="1"/>
<dbReference type="EMBL" id="CP000247">
    <property type="protein sequence ID" value="ABG70361.1"/>
    <property type="molecule type" value="Genomic_DNA"/>
</dbReference>
<dbReference type="RefSeq" id="WP_001043805.1">
    <property type="nucleotide sequence ID" value="NC_008253.1"/>
</dbReference>
<dbReference type="SMR" id="Q0TFB8"/>
<dbReference type="MEROPS" id="M74.001"/>
<dbReference type="KEGG" id="ecp:ECP_2367"/>
<dbReference type="HOGENOM" id="CLU_052496_0_0_6"/>
<dbReference type="Proteomes" id="UP000009182">
    <property type="component" value="Chromosome"/>
</dbReference>
<dbReference type="GO" id="GO:0030288">
    <property type="term" value="C:outer membrane-bounded periplasmic space"/>
    <property type="evidence" value="ECO:0007669"/>
    <property type="project" value="InterPro"/>
</dbReference>
<dbReference type="GO" id="GO:0046872">
    <property type="term" value="F:metal ion binding"/>
    <property type="evidence" value="ECO:0007669"/>
    <property type="project" value="UniProtKB-KW"/>
</dbReference>
<dbReference type="GO" id="GO:0004222">
    <property type="term" value="F:metalloendopeptidase activity"/>
    <property type="evidence" value="ECO:0007669"/>
    <property type="project" value="UniProtKB-UniRule"/>
</dbReference>
<dbReference type="GO" id="GO:0004252">
    <property type="term" value="F:serine-type endopeptidase activity"/>
    <property type="evidence" value="ECO:0007669"/>
    <property type="project" value="InterPro"/>
</dbReference>
<dbReference type="GO" id="GO:0000270">
    <property type="term" value="P:peptidoglycan metabolic process"/>
    <property type="evidence" value="ECO:0007669"/>
    <property type="project" value="UniProtKB-UniRule"/>
</dbReference>
<dbReference type="GO" id="GO:0006508">
    <property type="term" value="P:proteolysis"/>
    <property type="evidence" value="ECO:0007669"/>
    <property type="project" value="UniProtKB-KW"/>
</dbReference>
<dbReference type="FunFam" id="3.30.1380.10:FF:000002">
    <property type="entry name" value="Penicillin-insensitive murein endopeptidase"/>
    <property type="match status" value="1"/>
</dbReference>
<dbReference type="Gene3D" id="3.30.1380.10">
    <property type="match status" value="1"/>
</dbReference>
<dbReference type="HAMAP" id="MF_01623">
    <property type="entry name" value="MepA"/>
    <property type="match status" value="1"/>
</dbReference>
<dbReference type="InterPro" id="IPR009045">
    <property type="entry name" value="Hedgehog_sig/DD-Pept_Zn-bd_sf"/>
</dbReference>
<dbReference type="InterPro" id="IPR005073">
    <property type="entry name" value="Peptidase_M74"/>
</dbReference>
<dbReference type="NCBIfam" id="NF006947">
    <property type="entry name" value="PRK09429.1"/>
    <property type="match status" value="1"/>
</dbReference>
<dbReference type="Pfam" id="PF03411">
    <property type="entry name" value="Peptidase_M74"/>
    <property type="match status" value="1"/>
</dbReference>
<dbReference type="PIRSF" id="PIRSF018455">
    <property type="entry name" value="MepA"/>
    <property type="match status" value="1"/>
</dbReference>
<dbReference type="SUPFAM" id="SSF55166">
    <property type="entry name" value="Hedgehog/DD-peptidase"/>
    <property type="match status" value="1"/>
</dbReference>
<evidence type="ECO:0000255" key="1">
    <source>
        <dbReference type="HAMAP-Rule" id="MF_01623"/>
    </source>
</evidence>
<evidence type="ECO:0000256" key="2">
    <source>
        <dbReference type="SAM" id="MobiDB-lite"/>
    </source>
</evidence>
<feature type="signal peptide" evidence="1">
    <location>
        <begin position="1"/>
        <end position="19"/>
    </location>
</feature>
<feature type="chain" id="PRO_0000292555" description="Penicillin-insensitive murein endopeptidase">
    <location>
        <begin position="20"/>
        <end position="274"/>
    </location>
</feature>
<feature type="region of interest" description="Disordered" evidence="2">
    <location>
        <begin position="227"/>
        <end position="274"/>
    </location>
</feature>
<feature type="binding site" evidence="1">
    <location>
        <position position="110"/>
    </location>
    <ligand>
        <name>Zn(2+)</name>
        <dbReference type="ChEBI" id="CHEBI:29105"/>
        <label>1</label>
    </ligand>
</feature>
<feature type="binding site" evidence="1">
    <location>
        <position position="113"/>
    </location>
    <ligand>
        <name>Zn(2+)</name>
        <dbReference type="ChEBI" id="CHEBI:29105"/>
        <label>1</label>
    </ligand>
</feature>
<feature type="binding site" evidence="1">
    <location>
        <position position="120"/>
    </location>
    <ligand>
        <name>Zn(2+)</name>
        <dbReference type="ChEBI" id="CHEBI:29105"/>
        <label>1</label>
    </ligand>
</feature>
<feature type="binding site" evidence="1">
    <location>
        <position position="147"/>
    </location>
    <ligand>
        <name>Zn(2+)</name>
        <dbReference type="ChEBI" id="CHEBI:29105"/>
        <label>2</label>
    </ligand>
</feature>
<feature type="binding site" evidence="1">
    <location>
        <position position="150"/>
    </location>
    <ligand>
        <name>Zn(2+)</name>
        <dbReference type="ChEBI" id="CHEBI:29105"/>
        <label>2</label>
    </ligand>
</feature>
<feature type="binding site" evidence="1">
    <location>
        <position position="211"/>
    </location>
    <ligand>
        <name>Zn(2+)</name>
        <dbReference type="ChEBI" id="CHEBI:29105"/>
        <label>1</label>
    </ligand>
</feature>
<feature type="disulfide bond" evidence="1">
    <location>
        <begin position="44"/>
        <end position="265"/>
    </location>
</feature>
<feature type="disulfide bond" evidence="1">
    <location>
        <begin position="187"/>
        <end position="235"/>
    </location>
</feature>
<feature type="disulfide bond" evidence="1">
    <location>
        <begin position="216"/>
        <end position="223"/>
    </location>
</feature>
<keyword id="KW-1015">Disulfide bond</keyword>
<keyword id="KW-0378">Hydrolase</keyword>
<keyword id="KW-0479">Metal-binding</keyword>
<keyword id="KW-0482">Metalloprotease</keyword>
<keyword id="KW-0574">Periplasm</keyword>
<keyword id="KW-0645">Protease</keyword>
<keyword id="KW-0732">Signal</keyword>
<keyword id="KW-0862">Zinc</keyword>
<comment type="function">
    <text evidence="1">Murein endopeptidase that cleaves the D-alanyl-meso-2,6-diamino-pimelyl amide bond that connects peptidoglycan strands. Likely plays a role in the removal of murein from the sacculus.</text>
</comment>
<comment type="cofactor">
    <cofactor evidence="1">
        <name>Zn(2+)</name>
        <dbReference type="ChEBI" id="CHEBI:29105"/>
    </cofactor>
    <text evidence="1">Binds 2 Zn(2+) ions per subunit. Zn(2+) ion 1 is bound in the active site. Zn(2+) ion 2 is bound at the dimer interface by residues from both subunits.</text>
</comment>
<comment type="subunit">
    <text evidence="1">Dimer.</text>
</comment>
<comment type="subcellular location">
    <subcellularLocation>
        <location evidence="1">Periplasm</location>
    </subcellularLocation>
</comment>
<comment type="similarity">
    <text evidence="1">Belongs to the peptidase M74 family.</text>
</comment>
<proteinExistence type="inferred from homology"/>
<gene>
    <name evidence="1" type="primary">mepA</name>
    <name type="ordered locus">ECP_2367</name>
</gene>
<protein>
    <recommendedName>
        <fullName evidence="1">Penicillin-insensitive murein endopeptidase</fullName>
        <ecNumber evidence="1">3.4.24.-</ecNumber>
    </recommendedName>
    <alternativeName>
        <fullName evidence="1">D-alanyl-D-alanine-endopeptidase</fullName>
        <shortName evidence="1">DD-endopeptidase</shortName>
    </alternativeName>
</protein>
<accession>Q0TFB8</accession>
<reference key="1">
    <citation type="journal article" date="2006" name="Mol. Microbiol.">
        <title>Role of pathogenicity island-associated integrases in the genome plasticity of uropathogenic Escherichia coli strain 536.</title>
        <authorList>
            <person name="Hochhut B."/>
            <person name="Wilde C."/>
            <person name="Balling G."/>
            <person name="Middendorf B."/>
            <person name="Dobrindt U."/>
            <person name="Brzuszkiewicz E."/>
            <person name="Gottschalk G."/>
            <person name="Carniel E."/>
            <person name="Hacker J."/>
        </authorList>
    </citation>
    <scope>NUCLEOTIDE SEQUENCE [LARGE SCALE GENOMIC DNA]</scope>
    <source>
        <strain>536 / UPEC</strain>
    </source>
</reference>